<feature type="chain" id="PRO_0000184151" description="Transcriptional activator protein EsaR">
    <location>
        <begin position="1"/>
        <end position="249"/>
    </location>
</feature>
<feature type="domain" description="HTH luxR-type" evidence="1">
    <location>
        <begin position="174"/>
        <end position="239"/>
    </location>
</feature>
<feature type="DNA-binding region" description="H-T-H motif" evidence="1">
    <location>
        <begin position="198"/>
        <end position="217"/>
    </location>
</feature>
<keyword id="KW-0010">Activator</keyword>
<keyword id="KW-0238">DNA-binding</keyword>
<keyword id="KW-0673">Quorum sensing</keyword>
<keyword id="KW-0804">Transcription</keyword>
<keyword id="KW-0805">Transcription regulation</keyword>
<accession>P54293</accession>
<dbReference type="EMBL" id="L32184">
    <property type="protein sequence ID" value="AAA82097.1"/>
    <property type="molecule type" value="Genomic_DNA"/>
</dbReference>
<dbReference type="RefSeq" id="WP_006119203.1">
    <property type="nucleotide sequence ID" value="NZ_VZPF01000009.1"/>
</dbReference>
<dbReference type="SMR" id="P54293"/>
<dbReference type="GO" id="GO:0003677">
    <property type="term" value="F:DNA binding"/>
    <property type="evidence" value="ECO:0007669"/>
    <property type="project" value="UniProtKB-KW"/>
</dbReference>
<dbReference type="GO" id="GO:0042802">
    <property type="term" value="F:identical protein binding"/>
    <property type="evidence" value="ECO:0000353"/>
    <property type="project" value="IntAct"/>
</dbReference>
<dbReference type="GO" id="GO:0009372">
    <property type="term" value="P:quorum sensing"/>
    <property type="evidence" value="ECO:0007669"/>
    <property type="project" value="UniProtKB-KW"/>
</dbReference>
<dbReference type="GO" id="GO:0006355">
    <property type="term" value="P:regulation of DNA-templated transcription"/>
    <property type="evidence" value="ECO:0007669"/>
    <property type="project" value="InterPro"/>
</dbReference>
<dbReference type="CDD" id="cd06170">
    <property type="entry name" value="LuxR_C_like"/>
    <property type="match status" value="1"/>
</dbReference>
<dbReference type="FunFam" id="3.30.450.80:FF:000009">
    <property type="entry name" value="Quorum-sensing transcriptional activator EsaR"/>
    <property type="match status" value="1"/>
</dbReference>
<dbReference type="Gene3D" id="3.30.450.80">
    <property type="entry name" value="Transcription factor LuxR-like, autoinducer-binding domain"/>
    <property type="match status" value="1"/>
</dbReference>
<dbReference type="Gene3D" id="1.10.10.10">
    <property type="entry name" value="Winged helix-like DNA-binding domain superfamily/Winged helix DNA-binding domain"/>
    <property type="match status" value="1"/>
</dbReference>
<dbReference type="InterPro" id="IPR016032">
    <property type="entry name" value="Sig_transdc_resp-reg_C-effctor"/>
</dbReference>
<dbReference type="InterPro" id="IPR005143">
    <property type="entry name" value="TF_LuxR_autoind-bd_dom"/>
</dbReference>
<dbReference type="InterPro" id="IPR036693">
    <property type="entry name" value="TF_LuxR_autoind-bd_dom_sf"/>
</dbReference>
<dbReference type="InterPro" id="IPR000792">
    <property type="entry name" value="Tscrpt_reg_LuxR_C"/>
</dbReference>
<dbReference type="InterPro" id="IPR036388">
    <property type="entry name" value="WH-like_DNA-bd_sf"/>
</dbReference>
<dbReference type="PANTHER" id="PTHR44688">
    <property type="entry name" value="DNA-BINDING TRANSCRIPTIONAL ACTIVATOR DEVR_DOSR"/>
    <property type="match status" value="1"/>
</dbReference>
<dbReference type="PANTHER" id="PTHR44688:SF16">
    <property type="entry name" value="DNA-BINDING TRANSCRIPTIONAL ACTIVATOR DEVR_DOSR"/>
    <property type="match status" value="1"/>
</dbReference>
<dbReference type="Pfam" id="PF03472">
    <property type="entry name" value="Autoind_bind"/>
    <property type="match status" value="1"/>
</dbReference>
<dbReference type="Pfam" id="PF00196">
    <property type="entry name" value="GerE"/>
    <property type="match status" value="1"/>
</dbReference>
<dbReference type="PRINTS" id="PR00038">
    <property type="entry name" value="HTHLUXR"/>
</dbReference>
<dbReference type="SMART" id="SM00421">
    <property type="entry name" value="HTH_LUXR"/>
    <property type="match status" value="1"/>
</dbReference>
<dbReference type="SUPFAM" id="SSF46894">
    <property type="entry name" value="C-terminal effector domain of the bipartite response regulators"/>
    <property type="match status" value="1"/>
</dbReference>
<dbReference type="SUPFAM" id="SSF75516">
    <property type="entry name" value="Pheromone-binding domain of LuxR-like quorum-sensing transcription factors"/>
    <property type="match status" value="1"/>
</dbReference>
<dbReference type="PROSITE" id="PS00622">
    <property type="entry name" value="HTH_LUXR_1"/>
    <property type="match status" value="1"/>
</dbReference>
<dbReference type="PROSITE" id="PS50043">
    <property type="entry name" value="HTH_LUXR_2"/>
    <property type="match status" value="1"/>
</dbReference>
<sequence length="249" mass="28103">MFSFFLENQTITDTLQTYIQRKLSPLGSPDYAYTVVSKKNPSNVLIISSYPDEWIRLYRANNFQLTDPVILTAFKRTSPFAWDENITLMSDLRFTKIFSLSKQYNIVNGFTYVLHDHMNNLALLSVIIKGNDQTALEQRLAAEQGTMQMLLIDFNEQMYRLAGTEGERAPALNQSADKTIFSSRENEVLYWASMGKTYAEIAAITGISVSTVKFHIKNVVVKLGVSNARQAIRLGVELDLIRPAASAAR</sequence>
<organism>
    <name type="scientific">Pantoea stewartii subsp. stewartii</name>
    <name type="common">Erwinia stewartii</name>
    <dbReference type="NCBI Taxonomy" id="66271"/>
    <lineage>
        <taxon>Bacteria</taxon>
        <taxon>Pseudomonadati</taxon>
        <taxon>Pseudomonadota</taxon>
        <taxon>Gammaproteobacteria</taxon>
        <taxon>Enterobacterales</taxon>
        <taxon>Erwiniaceae</taxon>
        <taxon>Pantoea</taxon>
    </lineage>
</organism>
<reference key="1">
    <citation type="journal article" date="1995" name="J. Bacteriol.">
        <title>Capsular polysaccharide biosynthesis and pathogenicity in Erwinia stewartii require induction by an N-acylhomoserine lactone autoinducer.</title>
        <authorList>
            <person name="von Bodman S.B."/>
            <person name="Farrand S.K."/>
        </authorList>
    </citation>
    <scope>NUCLEOTIDE SEQUENCE [GENOMIC DNA]</scope>
    <source>
        <strain>SS104</strain>
    </source>
</reference>
<gene>
    <name type="primary">esaR</name>
</gene>
<proteinExistence type="evidence at protein level"/>
<name>ESAR_PANSE</name>
<evidence type="ECO:0000255" key="1">
    <source>
        <dbReference type="PROSITE-ProRule" id="PRU00411"/>
    </source>
</evidence>
<evidence type="ECO:0000305" key="2"/>
<comment type="function">
    <text>Functions as a potential OhlL-responsive transcriptional regulator.</text>
</comment>
<comment type="interaction">
    <interactant intactId="EBI-6416680">
        <id>P54293</id>
    </interactant>
    <interactant intactId="EBI-6416680">
        <id>P54293</id>
        <label>esaR</label>
    </interactant>
    <organismsDiffer>false</organismsDiffer>
    <experiments>2</experiments>
</comment>
<comment type="similarity">
    <text evidence="2">Belongs to the autoinducer-regulated transcriptional regulatory protein family.</text>
</comment>
<protein>
    <recommendedName>
        <fullName>Transcriptional activator protein EsaR</fullName>
    </recommendedName>
</protein>